<accession>A0NXQ9</accession>
<name>T3HPD_ROSAI</name>
<reference key="1">
    <citation type="submission" date="2006-05" db="EMBL/GenBank/DDBJ databases">
        <authorList>
            <person name="King G."/>
            <person name="Ferriera S."/>
            <person name="Johnson J."/>
            <person name="Kravitz S."/>
            <person name="Beeson K."/>
            <person name="Sutton G."/>
            <person name="Rogers Y.-H."/>
            <person name="Friedman R."/>
            <person name="Frazier M."/>
            <person name="Venter J.C."/>
        </authorList>
    </citation>
    <scope>NUCLEOTIDE SEQUENCE [LARGE SCALE GENOMIC DNA]</scope>
    <source>
        <strain>ATCC 25650 / DSM 13394 / JCM 20685 / NBRC 16684 / NCIMB 2208 / IAM 12614 / B1</strain>
    </source>
</reference>
<reference key="2">
    <citation type="journal article" date="2014" name="Elife">
        <title>Prediction and characterization of enzymatic activities guided by sequence similarity and genome neighborhood networks.</title>
        <authorList>
            <person name="Zhao S."/>
            <person name="Sakai A."/>
            <person name="Zhang X."/>
            <person name="Vetting M.W."/>
            <person name="Kumar R."/>
            <person name="Hillerich B."/>
            <person name="San Francisco B."/>
            <person name="Solbiati J."/>
            <person name="Steves A."/>
            <person name="Brown S."/>
            <person name="Akiva E."/>
            <person name="Barber A."/>
            <person name="Seidel R.D."/>
            <person name="Babbitt P.C."/>
            <person name="Almo S.C."/>
            <person name="Gerlt J.A."/>
            <person name="Jacobson M.P."/>
        </authorList>
    </citation>
    <scope>FUNCTION</scope>
    <scope>CATALYTIC ACTIVITY</scope>
    <scope>BIOPHYSICOCHEMICAL PROPERTIES</scope>
    <scope>INDUCTION</scope>
    <source>
        <strain>ATCC 25650 / DSM 13394 / JCM 20685 / NBRC 16684 / NCIMB 2208 / IAM 12614 / B1</strain>
    </source>
</reference>
<dbReference type="EC" id="4.2.1.77" evidence="2"/>
<dbReference type="EMBL" id="AAUW01000014">
    <property type="protein sequence ID" value="EAV42586.1"/>
    <property type="molecule type" value="Genomic_DNA"/>
</dbReference>
<dbReference type="RefSeq" id="WP_006937106.1">
    <property type="nucleotide sequence ID" value="NZ_AAUW01000014.1"/>
</dbReference>
<dbReference type="SMR" id="A0NXQ9"/>
<dbReference type="GeneID" id="68848138"/>
<dbReference type="eggNOG" id="COG3938">
    <property type="taxonomic scope" value="Bacteria"/>
</dbReference>
<dbReference type="OrthoDB" id="181267at2"/>
<dbReference type="SABIO-RK" id="A0NXQ9"/>
<dbReference type="Proteomes" id="UP000004848">
    <property type="component" value="Unassembled WGS sequence"/>
</dbReference>
<dbReference type="GO" id="GO:0047580">
    <property type="term" value="F:4-hydroxyproline epimerase activity"/>
    <property type="evidence" value="ECO:0007669"/>
    <property type="project" value="TreeGrafter"/>
</dbReference>
<dbReference type="GO" id="GO:0050346">
    <property type="term" value="F:trans-L-3-hydroxyproline dehydratase activity"/>
    <property type="evidence" value="ECO:0000314"/>
    <property type="project" value="CACAO"/>
</dbReference>
<dbReference type="FunFam" id="3.10.310.10:FF:000010">
    <property type="entry name" value="Proline racemase"/>
    <property type="match status" value="1"/>
</dbReference>
<dbReference type="Gene3D" id="3.10.310.10">
    <property type="entry name" value="Diaminopimelate Epimerase, Chain A, domain 1"/>
    <property type="match status" value="2"/>
</dbReference>
<dbReference type="InterPro" id="IPR008794">
    <property type="entry name" value="Pro_racemase_fam"/>
</dbReference>
<dbReference type="NCBIfam" id="NF047722">
    <property type="entry name" value="T3LHypDht"/>
    <property type="match status" value="1"/>
</dbReference>
<dbReference type="PANTHER" id="PTHR33442:SF5">
    <property type="entry name" value="BIFUNCTIONAL TRANS-3-HYDROXY-L-PROLINE DEHYDRATASE_2-EPIMERASE"/>
    <property type="match status" value="1"/>
</dbReference>
<dbReference type="PANTHER" id="PTHR33442">
    <property type="entry name" value="TRANS-3-HYDROXY-L-PROLINE DEHYDRATASE"/>
    <property type="match status" value="1"/>
</dbReference>
<dbReference type="Pfam" id="PF05544">
    <property type="entry name" value="Pro_racemase"/>
    <property type="match status" value="1"/>
</dbReference>
<dbReference type="PIRSF" id="PIRSF029792">
    <property type="entry name" value="Pro_racemase"/>
    <property type="match status" value="1"/>
</dbReference>
<dbReference type="SFLD" id="SFLDS00028">
    <property type="entry name" value="Proline_Racemase"/>
    <property type="match status" value="1"/>
</dbReference>
<dbReference type="SUPFAM" id="SSF54506">
    <property type="entry name" value="Diaminopimelate epimerase-like"/>
    <property type="match status" value="1"/>
</dbReference>
<organism>
    <name type="scientific">Roseibium aggregatum (strain ATCC 25650 / DSM 13394 / JCM 20685 / NBRC 16684 / NCIMB 2208 / IAM 12614 / B1)</name>
    <name type="common">Stappia aggregata</name>
    <dbReference type="NCBI Taxonomy" id="384765"/>
    <lineage>
        <taxon>Bacteria</taxon>
        <taxon>Pseudomonadati</taxon>
        <taxon>Pseudomonadota</taxon>
        <taxon>Alphaproteobacteria</taxon>
        <taxon>Hyphomicrobiales</taxon>
        <taxon>Stappiaceae</taxon>
        <taxon>Roseibium</taxon>
    </lineage>
</organism>
<proteinExistence type="evidence at protein level"/>
<sequence>MRSTKTIHVISCHAEGEVGDVIVGGVAPPPGETLWEQRSFIARDQTLRNFVLNEPRGGVFRHVNLLVPPRHPEADAAFIIMEPEDTPPMSGSNSICVSTVLLDGGIVPMIEPITEMVLEAPGGLVRVKAECRNGKAERIFVQNVTSFADKLSVPLDVEGIGTLTVDTAYGGDSFVVVDAEALGFAIVEDEAKDIARLGVRITNAANEQLGFSHPENPDWNHISFCAFCGPLSQTPTGLTGRSAVAIQPGKVDRSPTGTAVSARMALMAARGQMTIGDTFEAVSIIGSSFTGRIVSQQMAGDRPGIVPEISGRGWITGIHQHMLDPSDPWPGGYKLSDTWGA</sequence>
<feature type="chain" id="PRO_0000432271" description="Trans-3-hydroxy-L-proline dehydratase">
    <location>
        <begin position="1"/>
        <end position="341"/>
    </location>
</feature>
<feature type="active site" description="Proton acceptor" evidence="1">
    <location>
        <position position="90"/>
    </location>
</feature>
<feature type="binding site" evidence="1">
    <location>
        <begin position="91"/>
        <end position="92"/>
    </location>
    <ligand>
        <name>substrate</name>
    </ligand>
</feature>
<feature type="binding site" evidence="1">
    <location>
        <position position="252"/>
    </location>
    <ligand>
        <name>substrate</name>
    </ligand>
</feature>
<feature type="binding site" evidence="1">
    <location>
        <begin position="257"/>
        <end position="258"/>
    </location>
    <ligand>
        <name>substrate</name>
    </ligand>
</feature>
<comment type="function">
    <text evidence="2">Catalyzes the dehydration of trans-3-hydroxy-L-proline (t3LHyp) to Delta(1)-pyrroline-2-carboxylate (Pyr2C). May be involved in a degradation pathway of t3LHyp, which would allow L.aggregata to grow on t3LHyp as a sole carbon source. Displays neither proline racemase activity nor 4-hydroxyproline 2-epimerase activity.</text>
</comment>
<comment type="catalytic activity">
    <reaction evidence="2">
        <text>trans-3-hydroxy-L-proline = 1-pyrroline-2-carboxylate + H2O</text>
        <dbReference type="Rhea" id="RHEA:10320"/>
        <dbReference type="ChEBI" id="CHEBI:15377"/>
        <dbReference type="ChEBI" id="CHEBI:39785"/>
        <dbReference type="ChEBI" id="CHEBI:57938"/>
        <dbReference type="EC" id="4.2.1.77"/>
    </reaction>
</comment>
<comment type="biophysicochemical properties">
    <kinetics>
        <KM evidence="2">7.8 mM for trans-3-hydroxy-L-proline</KM>
        <text evidence="2">kcat is 15 sec(-1) for t3LHyp dehydration.</text>
    </kinetics>
</comment>
<comment type="induction">
    <text evidence="2">Is up-regulated when the bacterium is grown on t4LHyp or t3LHyp as sole carbon source.</text>
</comment>
<comment type="similarity">
    <text evidence="4">Belongs to the proline racemase family.</text>
</comment>
<keyword id="KW-0456">Lyase</keyword>
<evidence type="ECO:0000250" key="1">
    <source>
        <dbReference type="UniProtKB" id="B9K4G4"/>
    </source>
</evidence>
<evidence type="ECO:0000269" key="2">
    <source>
    </source>
</evidence>
<evidence type="ECO:0000303" key="3">
    <source>
    </source>
</evidence>
<evidence type="ECO:0000305" key="4"/>
<evidence type="ECO:0000312" key="5">
    <source>
        <dbReference type="EMBL" id="EAV42586.1"/>
    </source>
</evidence>
<protein>
    <recommendedName>
        <fullName evidence="3">Trans-3-hydroxy-L-proline dehydratase</fullName>
        <shortName>T3LHyp dehydratase</shortName>
        <shortName evidence="3">t3HypD</shortName>
        <ecNumber evidence="2">4.2.1.77</ecNumber>
    </recommendedName>
    <alternativeName>
        <fullName>Trans-L-3-hydroxyproline dehydratase</fullName>
    </alternativeName>
</protein>
<gene>
    <name evidence="5" type="ORF">SIAM614_28502</name>
</gene>